<sequence>MSDKTVKSTNLMAFVATKMLERQEDLDTCTEMQVEKMKTSTKARLRTESSFAPRTWEDAIKDGELLFNGTILQAESPTMTPASVEMKGKKFPIDFAPSNIAPIGQNPIYLSPCIPNFDGNVWEATMYHHRGATLTKTMNCNCFQRTIWCHPNPSRMRLSYAFVLYCRNTKKICGYLIAKQVAGIETGIRKCFRCIKSGFVMATDEISLTILQSIKSGAQLDPYWGNETPDIDKTEAYMLSLREAGP</sequence>
<organism>
    <name type="scientific">Influenza C virus (strain C/Yamagata/1964)</name>
    <dbReference type="NCBI Taxonomy" id="217166"/>
    <lineage>
        <taxon>Viruses</taxon>
        <taxon>Riboviria</taxon>
        <taxon>Orthornavirae</taxon>
        <taxon>Negarnaviricota</taxon>
        <taxon>Polyploviricotina</taxon>
        <taxon>Insthoviricetes</taxon>
        <taxon>Articulavirales</taxon>
        <taxon>Orthomyxoviridae</taxon>
        <taxon>Gammainfluenzavirus</taxon>
        <taxon>Gammainfluenzavirus influenzae</taxon>
        <taxon>Influenza C virus</taxon>
    </lineage>
</organism>
<proteinExistence type="inferred from homology"/>
<protein>
    <recommendedName>
        <fullName evidence="1">Non-structural protein 1</fullName>
        <shortName evidence="1">NS1</shortName>
    </recommendedName>
    <alternativeName>
        <fullName evidence="1">NS1A</fullName>
    </alternativeName>
</protein>
<reference key="1">
    <citation type="journal article" date="2000" name="J. Gen. Virol.">
        <title>Phylogenetic analysis of influenza C virus nonstructural (NS) protein genes and identification of the NS2 protein.</title>
        <authorList>
            <person name="Alamgir A.S.M."/>
            <person name="Matsuzaki Y."/>
            <person name="Hongo S."/>
            <person name="Tsuchiya E."/>
            <person name="Sugawara K."/>
            <person name="Muraki Y."/>
            <person name="Nakamura K."/>
        </authorList>
    </citation>
    <scope>NUCLEOTIDE SEQUENCE [GENOMIC RNA]</scope>
</reference>
<comment type="function">
    <text evidence="1">Prevents the establishment of the cellular antiviral state initiated by host RIGI, which normally triggers the antiviral transduction signal that leads to the activation of type I IFN genes by transcription factors IRF3 and IRF7. Also participates in the up-regulation of the splicing of viral mRNAs.</text>
</comment>
<comment type="subcellular location">
    <subcellularLocation>
        <location evidence="1">Host cytoplasm</location>
    </subcellularLocation>
    <subcellularLocation>
        <location evidence="1">Host nucleus</location>
    </subcellularLocation>
</comment>
<comment type="alternative products">
    <event type="alternative splicing"/>
    <isoform>
        <id>Q784P6-1</id>
        <name>NS1</name>
        <sequence type="displayed"/>
    </isoform>
    <isoform>
        <id>Q9ENZ3-1</id>
        <name>NEP</name>
        <name>NS2</name>
        <sequence type="external"/>
    </isoform>
</comment>
<comment type="similarity">
    <text evidence="1">Belongs to the influenza C viruses NS1 family.</text>
</comment>
<feature type="chain" id="PRO_0000223626" description="Non-structural protein 1">
    <location>
        <begin position="1"/>
        <end position="246"/>
    </location>
</feature>
<accession>Q784P6</accession>
<name>NS1_INCY6</name>
<gene>
    <name evidence="1" type="primary">NS</name>
</gene>
<keyword id="KW-0025">Alternative splicing</keyword>
<keyword id="KW-1035">Host cytoplasm</keyword>
<keyword id="KW-1048">Host nucleus</keyword>
<keyword id="KW-0945">Host-virus interaction</keyword>
<keyword id="KW-1090">Inhibition of host innate immune response by virus</keyword>
<keyword id="KW-1114">Inhibition of host interferon signaling pathway by virus</keyword>
<keyword id="KW-1088">Inhibition of host RIG-I by virus</keyword>
<keyword id="KW-1113">Inhibition of host RLR pathway by virus</keyword>
<keyword id="KW-0922">Interferon antiviral system evasion</keyword>
<keyword id="KW-0694">RNA-binding</keyword>
<keyword id="KW-0899">Viral immunoevasion</keyword>
<organismHost>
    <name type="scientific">Homo sapiens</name>
    <name type="common">Human</name>
    <dbReference type="NCBI Taxonomy" id="9606"/>
</organismHost>
<organismHost>
    <name type="scientific">Sus scrofa</name>
    <name type="common">Pig</name>
    <dbReference type="NCBI Taxonomy" id="9823"/>
</organismHost>
<dbReference type="EMBL" id="AB034155">
    <property type="protein sequence ID" value="BAB12049.1"/>
    <property type="molecule type" value="Genomic_RNA"/>
</dbReference>
<dbReference type="GO" id="GO:0030430">
    <property type="term" value="C:host cell cytoplasm"/>
    <property type="evidence" value="ECO:0007669"/>
    <property type="project" value="UniProtKB-SubCell"/>
</dbReference>
<dbReference type="GO" id="GO:0042025">
    <property type="term" value="C:host cell nucleus"/>
    <property type="evidence" value="ECO:0007669"/>
    <property type="project" value="UniProtKB-SubCell"/>
</dbReference>
<dbReference type="GO" id="GO:0003723">
    <property type="term" value="F:RNA binding"/>
    <property type="evidence" value="ECO:0007669"/>
    <property type="project" value="UniProtKB-KW"/>
</dbReference>
<dbReference type="GO" id="GO:0039540">
    <property type="term" value="P:symbiont-mediated suppression of host cytoplasmic pattern recognition receptor signaling pathway via inhibition of RIG-I activity"/>
    <property type="evidence" value="ECO:0007669"/>
    <property type="project" value="UniProtKB-KW"/>
</dbReference>
<dbReference type="GO" id="GO:0039502">
    <property type="term" value="P:symbiont-mediated suppression of host type I interferon-mediated signaling pathway"/>
    <property type="evidence" value="ECO:0007669"/>
    <property type="project" value="UniProtKB-KW"/>
</dbReference>
<dbReference type="HAMAP" id="MF_04066">
    <property type="entry name" value="INFV_NS1"/>
    <property type="match status" value="1"/>
</dbReference>
<dbReference type="InterPro" id="IPR005187">
    <property type="entry name" value="Flu_C_NS1"/>
</dbReference>
<dbReference type="InterPro" id="IPR005188">
    <property type="entry name" value="Flu_C_NS2"/>
</dbReference>
<dbReference type="InterPro" id="IPR004208">
    <property type="entry name" value="NS1"/>
</dbReference>
<dbReference type="Pfam" id="PF03506">
    <property type="entry name" value="Flu_C_NS1"/>
    <property type="match status" value="1"/>
</dbReference>
<dbReference type="Pfam" id="PF03555">
    <property type="entry name" value="Flu_C_NS2"/>
    <property type="match status" value="1"/>
</dbReference>
<evidence type="ECO:0000255" key="1">
    <source>
        <dbReference type="HAMAP-Rule" id="MF_04066"/>
    </source>
</evidence>